<reference key="1">
    <citation type="journal article" date="2008" name="PLoS ONE">
        <title>Comparative analysis of Acinetobacters: three genomes for three lifestyles.</title>
        <authorList>
            <person name="Vallenet D."/>
            <person name="Nordmann P."/>
            <person name="Barbe V."/>
            <person name="Poirel L."/>
            <person name="Mangenot S."/>
            <person name="Bataille E."/>
            <person name="Dossat C."/>
            <person name="Gas S."/>
            <person name="Kreimeyer A."/>
            <person name="Lenoble P."/>
            <person name="Oztas S."/>
            <person name="Poulain J."/>
            <person name="Segurens B."/>
            <person name="Robert C."/>
            <person name="Abergel C."/>
            <person name="Claverie J.-M."/>
            <person name="Raoult D."/>
            <person name="Medigue C."/>
            <person name="Weissenbach J."/>
            <person name="Cruveiller S."/>
        </authorList>
    </citation>
    <scope>NUCLEOTIDE SEQUENCE [LARGE SCALE GENOMIC DNA]</scope>
    <source>
        <strain>SDF</strain>
    </source>
</reference>
<keyword id="KW-0001">2Fe-2S</keyword>
<keyword id="KW-0963">Cytoplasm</keyword>
<keyword id="KW-0408">Iron</keyword>
<keyword id="KW-0411">Iron-sulfur</keyword>
<keyword id="KW-0479">Metal-binding</keyword>
<keyword id="KW-0663">Pyridoxal phosphate</keyword>
<keyword id="KW-0808">Transferase</keyword>
<feature type="chain" id="PRO_1000119617" description="Cysteine desulfurase IscS">
    <location>
        <begin position="1"/>
        <end position="405"/>
    </location>
</feature>
<feature type="active site" description="Cysteine persulfide intermediate" evidence="1">
    <location>
        <position position="329"/>
    </location>
</feature>
<feature type="binding site" evidence="1">
    <location>
        <begin position="75"/>
        <end position="76"/>
    </location>
    <ligand>
        <name>pyridoxal 5'-phosphate</name>
        <dbReference type="ChEBI" id="CHEBI:597326"/>
    </ligand>
</feature>
<feature type="binding site" evidence="1">
    <location>
        <position position="156"/>
    </location>
    <ligand>
        <name>pyridoxal 5'-phosphate</name>
        <dbReference type="ChEBI" id="CHEBI:597326"/>
    </ligand>
</feature>
<feature type="binding site" evidence="1">
    <location>
        <position position="184"/>
    </location>
    <ligand>
        <name>pyridoxal 5'-phosphate</name>
        <dbReference type="ChEBI" id="CHEBI:597326"/>
    </ligand>
</feature>
<feature type="binding site" evidence="1">
    <location>
        <begin position="204"/>
        <end position="206"/>
    </location>
    <ligand>
        <name>pyridoxal 5'-phosphate</name>
        <dbReference type="ChEBI" id="CHEBI:597326"/>
    </ligand>
</feature>
<feature type="binding site" evidence="1">
    <location>
        <position position="244"/>
    </location>
    <ligand>
        <name>pyridoxal 5'-phosphate</name>
        <dbReference type="ChEBI" id="CHEBI:597326"/>
    </ligand>
</feature>
<feature type="binding site" description="via persulfide group" evidence="1">
    <location>
        <position position="329"/>
    </location>
    <ligand>
        <name>[2Fe-2S] cluster</name>
        <dbReference type="ChEBI" id="CHEBI:190135"/>
        <note>ligand shared with IscU</note>
    </ligand>
</feature>
<feature type="modified residue" description="N6-(pyridoxal phosphate)lysine" evidence="1">
    <location>
        <position position="207"/>
    </location>
</feature>
<evidence type="ECO:0000255" key="1">
    <source>
        <dbReference type="HAMAP-Rule" id="MF_00331"/>
    </source>
</evidence>
<name>ISCS_ACIBS</name>
<dbReference type="EC" id="2.8.1.7" evidence="1"/>
<dbReference type="EMBL" id="CU468230">
    <property type="protein sequence ID" value="CAP01190.1"/>
    <property type="molecule type" value="Genomic_DNA"/>
</dbReference>
<dbReference type="SMR" id="B0VNW2"/>
<dbReference type="KEGG" id="abm:ABSDF1853"/>
<dbReference type="HOGENOM" id="CLU_003433_0_2_6"/>
<dbReference type="UniPathway" id="UPA00266"/>
<dbReference type="Proteomes" id="UP000001741">
    <property type="component" value="Chromosome"/>
</dbReference>
<dbReference type="GO" id="GO:1990221">
    <property type="term" value="C:L-cysteine desulfurase complex"/>
    <property type="evidence" value="ECO:0007669"/>
    <property type="project" value="UniProtKB-ARBA"/>
</dbReference>
<dbReference type="GO" id="GO:0051537">
    <property type="term" value="F:2 iron, 2 sulfur cluster binding"/>
    <property type="evidence" value="ECO:0007669"/>
    <property type="project" value="UniProtKB-UniRule"/>
</dbReference>
<dbReference type="GO" id="GO:0031071">
    <property type="term" value="F:cysteine desulfurase activity"/>
    <property type="evidence" value="ECO:0007669"/>
    <property type="project" value="UniProtKB-UniRule"/>
</dbReference>
<dbReference type="GO" id="GO:0046872">
    <property type="term" value="F:metal ion binding"/>
    <property type="evidence" value="ECO:0007669"/>
    <property type="project" value="UniProtKB-KW"/>
</dbReference>
<dbReference type="GO" id="GO:0030170">
    <property type="term" value="F:pyridoxal phosphate binding"/>
    <property type="evidence" value="ECO:0007669"/>
    <property type="project" value="UniProtKB-UniRule"/>
</dbReference>
<dbReference type="GO" id="GO:0044571">
    <property type="term" value="P:[2Fe-2S] cluster assembly"/>
    <property type="evidence" value="ECO:0007669"/>
    <property type="project" value="UniProtKB-UniRule"/>
</dbReference>
<dbReference type="FunFam" id="3.40.640.10:FF:000003">
    <property type="entry name" value="Cysteine desulfurase IscS"/>
    <property type="match status" value="1"/>
</dbReference>
<dbReference type="FunFam" id="3.90.1150.10:FF:000002">
    <property type="entry name" value="Cysteine desulfurase IscS"/>
    <property type="match status" value="1"/>
</dbReference>
<dbReference type="Gene3D" id="3.90.1150.10">
    <property type="entry name" value="Aspartate Aminotransferase, domain 1"/>
    <property type="match status" value="1"/>
</dbReference>
<dbReference type="Gene3D" id="3.40.640.10">
    <property type="entry name" value="Type I PLP-dependent aspartate aminotransferase-like (Major domain)"/>
    <property type="match status" value="1"/>
</dbReference>
<dbReference type="HAMAP" id="MF_00331">
    <property type="entry name" value="Cys_desulf_IscS"/>
    <property type="match status" value="1"/>
</dbReference>
<dbReference type="InterPro" id="IPR000192">
    <property type="entry name" value="Aminotrans_V_dom"/>
</dbReference>
<dbReference type="InterPro" id="IPR020578">
    <property type="entry name" value="Aminotrans_V_PyrdxlP_BS"/>
</dbReference>
<dbReference type="InterPro" id="IPR010240">
    <property type="entry name" value="Cys_deSase_IscS"/>
</dbReference>
<dbReference type="InterPro" id="IPR016454">
    <property type="entry name" value="Cysteine_dSase"/>
</dbReference>
<dbReference type="InterPro" id="IPR015424">
    <property type="entry name" value="PyrdxlP-dep_Trfase"/>
</dbReference>
<dbReference type="InterPro" id="IPR015421">
    <property type="entry name" value="PyrdxlP-dep_Trfase_major"/>
</dbReference>
<dbReference type="InterPro" id="IPR015422">
    <property type="entry name" value="PyrdxlP-dep_Trfase_small"/>
</dbReference>
<dbReference type="NCBIfam" id="TIGR02006">
    <property type="entry name" value="IscS"/>
    <property type="match status" value="1"/>
</dbReference>
<dbReference type="NCBIfam" id="NF010611">
    <property type="entry name" value="PRK14012.1"/>
    <property type="match status" value="1"/>
</dbReference>
<dbReference type="PANTHER" id="PTHR11601:SF34">
    <property type="entry name" value="CYSTEINE DESULFURASE"/>
    <property type="match status" value="1"/>
</dbReference>
<dbReference type="PANTHER" id="PTHR11601">
    <property type="entry name" value="CYSTEINE DESULFURYLASE FAMILY MEMBER"/>
    <property type="match status" value="1"/>
</dbReference>
<dbReference type="Pfam" id="PF00266">
    <property type="entry name" value="Aminotran_5"/>
    <property type="match status" value="1"/>
</dbReference>
<dbReference type="PIRSF" id="PIRSF005572">
    <property type="entry name" value="NifS"/>
    <property type="match status" value="1"/>
</dbReference>
<dbReference type="SUPFAM" id="SSF53383">
    <property type="entry name" value="PLP-dependent transferases"/>
    <property type="match status" value="1"/>
</dbReference>
<dbReference type="PROSITE" id="PS00595">
    <property type="entry name" value="AA_TRANSFER_CLASS_5"/>
    <property type="match status" value="1"/>
</dbReference>
<organism>
    <name type="scientific">Acinetobacter baumannii (strain SDF)</name>
    <dbReference type="NCBI Taxonomy" id="509170"/>
    <lineage>
        <taxon>Bacteria</taxon>
        <taxon>Pseudomonadati</taxon>
        <taxon>Pseudomonadota</taxon>
        <taxon>Gammaproteobacteria</taxon>
        <taxon>Moraxellales</taxon>
        <taxon>Moraxellaceae</taxon>
        <taxon>Acinetobacter</taxon>
        <taxon>Acinetobacter calcoaceticus/baumannii complex</taxon>
    </lineage>
</organism>
<gene>
    <name evidence="1" type="primary">iscS</name>
    <name type="ordered locus">ABSDF1853</name>
</gene>
<accession>B0VNW2</accession>
<proteinExistence type="inferred from homology"/>
<comment type="function">
    <text evidence="1">Master enzyme that delivers sulfur to a number of partners involved in Fe-S cluster assembly, tRNA modification or cofactor biosynthesis. Catalyzes the removal of elemental sulfur atoms from cysteine to produce alanine. Functions as a sulfur delivery protein for Fe-S cluster synthesis onto IscU, an Fe-S scaffold assembly protein, as well as other S acceptor proteins.</text>
</comment>
<comment type="catalytic activity">
    <reaction evidence="1">
        <text>(sulfur carrier)-H + L-cysteine = (sulfur carrier)-SH + L-alanine</text>
        <dbReference type="Rhea" id="RHEA:43892"/>
        <dbReference type="Rhea" id="RHEA-COMP:14737"/>
        <dbReference type="Rhea" id="RHEA-COMP:14739"/>
        <dbReference type="ChEBI" id="CHEBI:29917"/>
        <dbReference type="ChEBI" id="CHEBI:35235"/>
        <dbReference type="ChEBI" id="CHEBI:57972"/>
        <dbReference type="ChEBI" id="CHEBI:64428"/>
        <dbReference type="EC" id="2.8.1.7"/>
    </reaction>
</comment>
<comment type="cofactor">
    <cofactor evidence="1">
        <name>pyridoxal 5'-phosphate</name>
        <dbReference type="ChEBI" id="CHEBI:597326"/>
    </cofactor>
</comment>
<comment type="pathway">
    <text evidence="1">Cofactor biosynthesis; iron-sulfur cluster biosynthesis.</text>
</comment>
<comment type="subunit">
    <text evidence="1">Homodimer. Forms a heterotetramer with IscU, interacts with other sulfur acceptors.</text>
</comment>
<comment type="subcellular location">
    <subcellularLocation>
        <location evidence="1">Cytoplasm</location>
    </subcellularLocation>
</comment>
<comment type="similarity">
    <text evidence="1">Belongs to the class-V pyridoxal-phosphate-dependent aminotransferase family. NifS/IscS subfamily.</text>
</comment>
<sequence length="405" mass="44881">MKRPIYLDYAATTPVDPQVAERMMECLTFDGTFGNAASRSHAYGWQAEEKVEYAREQVANLIKADPREIVWTSGATESDNLALKGVAQFYASKGKHIITSKIEHKAVLDPCRELEEQGFEITYLEPEPQTGLITPEMVKAALRPDTILVSLMMVNNEIGTVTDVAVIGELTRANKTFFHVDAAQAAGKVDIDLSTMKIDLMSFSAHKIYGPKGIGALYVRRSPRVRLKAQIHGGGHERGMRSGTLATHQIVGMGEAFELAGKTMHAEQERIRKLRDKLWNGLQDLEQVFLNGHPTQNVANYLNVSFNFVEGESLMMSLKDAAVSSGSACTSATLEPSYVLRALGLSDELAHSSIRFSFGKYTTEEDIDHVLTITKAAVEKLRELSPLWDMYKEGIDLSTVEWAEH</sequence>
<protein>
    <recommendedName>
        <fullName evidence="1">Cysteine desulfurase IscS</fullName>
        <ecNumber evidence="1">2.8.1.7</ecNumber>
    </recommendedName>
</protein>